<sequence length="166" mass="19461">MFPMVTEFMNYGQQTVRAARYIGQGFMITLSHANRLPVTIQYPYEKLITSERFRGRIHFEFDKCIACEVCVRVCPIDLPVVDWKLETDIRKKRLLNYSIDFGICIFCGNCVEYCPTNCLSMTEEYELSTYDRHELNYNQIALGRLPMSVIDDYTIRTILNLPEIKT</sequence>
<proteinExistence type="inferred from homology"/>
<geneLocation type="chloroplast"/>
<comment type="function">
    <text evidence="1">NDH shuttles electrons from NAD(P)H:plastoquinone, via FMN and iron-sulfur (Fe-S) centers, to quinones in the photosynthetic chain and possibly in a chloroplast respiratory chain. The immediate electron acceptor for the enzyme in this species is believed to be plastoquinone. Couples the redox reaction to proton translocation, and thus conserves the redox energy in a proton gradient.</text>
</comment>
<comment type="catalytic activity">
    <reaction evidence="1">
        <text>a plastoquinone + NADH + (n+1) H(+)(in) = a plastoquinol + NAD(+) + n H(+)(out)</text>
        <dbReference type="Rhea" id="RHEA:42608"/>
        <dbReference type="Rhea" id="RHEA-COMP:9561"/>
        <dbReference type="Rhea" id="RHEA-COMP:9562"/>
        <dbReference type="ChEBI" id="CHEBI:15378"/>
        <dbReference type="ChEBI" id="CHEBI:17757"/>
        <dbReference type="ChEBI" id="CHEBI:57540"/>
        <dbReference type="ChEBI" id="CHEBI:57945"/>
        <dbReference type="ChEBI" id="CHEBI:62192"/>
    </reaction>
</comment>
<comment type="catalytic activity">
    <reaction evidence="1">
        <text>a plastoquinone + NADPH + (n+1) H(+)(in) = a plastoquinol + NADP(+) + n H(+)(out)</text>
        <dbReference type="Rhea" id="RHEA:42612"/>
        <dbReference type="Rhea" id="RHEA-COMP:9561"/>
        <dbReference type="Rhea" id="RHEA-COMP:9562"/>
        <dbReference type="ChEBI" id="CHEBI:15378"/>
        <dbReference type="ChEBI" id="CHEBI:17757"/>
        <dbReference type="ChEBI" id="CHEBI:57783"/>
        <dbReference type="ChEBI" id="CHEBI:58349"/>
        <dbReference type="ChEBI" id="CHEBI:62192"/>
    </reaction>
</comment>
<comment type="cofactor">
    <cofactor evidence="1">
        <name>[4Fe-4S] cluster</name>
        <dbReference type="ChEBI" id="CHEBI:49883"/>
    </cofactor>
    <text evidence="1">Binds 2 [4Fe-4S] clusters per subunit.</text>
</comment>
<comment type="subunit">
    <text evidence="1">NDH is composed of at least 16 different subunits, 5 of which are encoded in the nucleus.</text>
</comment>
<comment type="subcellular location">
    <subcellularLocation>
        <location evidence="1">Plastid</location>
        <location evidence="1">Chloroplast thylakoid membrane</location>
        <topology evidence="1">Peripheral membrane protein</topology>
    </subcellularLocation>
</comment>
<comment type="similarity">
    <text evidence="1">Belongs to the complex I 23 kDa subunit family.</text>
</comment>
<gene>
    <name evidence="1" type="primary">ndhI</name>
</gene>
<dbReference type="EC" id="7.1.1.-" evidence="1"/>
<dbReference type="EMBL" id="AF383835">
    <property type="protein sequence ID" value="AAN61776.1"/>
    <property type="molecule type" value="Genomic_DNA"/>
</dbReference>
<dbReference type="SMR" id="Q8HVM8"/>
<dbReference type="GO" id="GO:0009535">
    <property type="term" value="C:chloroplast thylakoid membrane"/>
    <property type="evidence" value="ECO:0007669"/>
    <property type="project" value="UniProtKB-SubCell"/>
</dbReference>
<dbReference type="GO" id="GO:0051539">
    <property type="term" value="F:4 iron, 4 sulfur cluster binding"/>
    <property type="evidence" value="ECO:0007669"/>
    <property type="project" value="UniProtKB-KW"/>
</dbReference>
<dbReference type="GO" id="GO:0005506">
    <property type="term" value="F:iron ion binding"/>
    <property type="evidence" value="ECO:0007669"/>
    <property type="project" value="UniProtKB-UniRule"/>
</dbReference>
<dbReference type="GO" id="GO:0008137">
    <property type="term" value="F:NADH dehydrogenase (ubiquinone) activity"/>
    <property type="evidence" value="ECO:0007669"/>
    <property type="project" value="InterPro"/>
</dbReference>
<dbReference type="GO" id="GO:0048038">
    <property type="term" value="F:quinone binding"/>
    <property type="evidence" value="ECO:0007669"/>
    <property type="project" value="UniProtKB-KW"/>
</dbReference>
<dbReference type="GO" id="GO:0019684">
    <property type="term" value="P:photosynthesis, light reaction"/>
    <property type="evidence" value="ECO:0007669"/>
    <property type="project" value="UniProtKB-UniRule"/>
</dbReference>
<dbReference type="FunFam" id="3.30.70.3270:FF:000006">
    <property type="entry name" value="NAD(P)H-quinone oxidoreductase subunit I, chloroplastic"/>
    <property type="match status" value="1"/>
</dbReference>
<dbReference type="Gene3D" id="3.30.70.3270">
    <property type="match status" value="1"/>
</dbReference>
<dbReference type="HAMAP" id="MF_01351">
    <property type="entry name" value="NDH1_NuoI"/>
    <property type="match status" value="1"/>
</dbReference>
<dbReference type="InterPro" id="IPR017896">
    <property type="entry name" value="4Fe4S_Fe-S-bd"/>
</dbReference>
<dbReference type="InterPro" id="IPR017900">
    <property type="entry name" value="4Fe4S_Fe_S_CS"/>
</dbReference>
<dbReference type="InterPro" id="IPR010226">
    <property type="entry name" value="NADH_quinone_OxRdtase_chainI"/>
</dbReference>
<dbReference type="InterPro" id="IPR004497">
    <property type="entry name" value="NDHI"/>
</dbReference>
<dbReference type="NCBIfam" id="TIGR00403">
    <property type="entry name" value="ndhI"/>
    <property type="match status" value="1"/>
</dbReference>
<dbReference type="NCBIfam" id="TIGR01971">
    <property type="entry name" value="NuoI"/>
    <property type="match status" value="1"/>
</dbReference>
<dbReference type="NCBIfam" id="NF004537">
    <property type="entry name" value="PRK05888.1-3"/>
    <property type="match status" value="1"/>
</dbReference>
<dbReference type="PANTHER" id="PTHR47275">
    <property type="entry name" value="NAD(P)H-QUINONE OXIDOREDUCTASE SUBUNIT I, CHLOROPLASTIC"/>
    <property type="match status" value="1"/>
</dbReference>
<dbReference type="PANTHER" id="PTHR47275:SF1">
    <property type="entry name" value="NAD(P)H-QUINONE OXIDOREDUCTASE SUBUNIT I, CHLOROPLASTIC"/>
    <property type="match status" value="1"/>
</dbReference>
<dbReference type="Pfam" id="PF00037">
    <property type="entry name" value="Fer4"/>
    <property type="match status" value="2"/>
</dbReference>
<dbReference type="SUPFAM" id="SSF54862">
    <property type="entry name" value="4Fe-4S ferredoxins"/>
    <property type="match status" value="1"/>
</dbReference>
<dbReference type="PROSITE" id="PS00198">
    <property type="entry name" value="4FE4S_FER_1"/>
    <property type="match status" value="2"/>
</dbReference>
<dbReference type="PROSITE" id="PS51379">
    <property type="entry name" value="4FE4S_FER_2"/>
    <property type="match status" value="2"/>
</dbReference>
<feature type="chain" id="PRO_0000250833" description="NAD(P)H-quinone oxidoreductase subunit I, chloroplastic">
    <location>
        <begin position="1"/>
        <end position="166"/>
    </location>
</feature>
<feature type="domain" description="4Fe-4S ferredoxin-type 1" evidence="1">
    <location>
        <begin position="55"/>
        <end position="84"/>
    </location>
</feature>
<feature type="domain" description="4Fe-4S ferredoxin-type 2" evidence="1">
    <location>
        <begin position="95"/>
        <end position="124"/>
    </location>
</feature>
<feature type="binding site" evidence="1">
    <location>
        <position position="64"/>
    </location>
    <ligand>
        <name>[4Fe-4S] cluster</name>
        <dbReference type="ChEBI" id="CHEBI:49883"/>
        <label>1</label>
    </ligand>
</feature>
<feature type="binding site" evidence="1">
    <location>
        <position position="67"/>
    </location>
    <ligand>
        <name>[4Fe-4S] cluster</name>
        <dbReference type="ChEBI" id="CHEBI:49883"/>
        <label>1</label>
    </ligand>
</feature>
<feature type="binding site" evidence="1">
    <location>
        <position position="70"/>
    </location>
    <ligand>
        <name>[4Fe-4S] cluster</name>
        <dbReference type="ChEBI" id="CHEBI:49883"/>
        <label>1</label>
    </ligand>
</feature>
<feature type="binding site" evidence="1">
    <location>
        <position position="74"/>
    </location>
    <ligand>
        <name>[4Fe-4S] cluster</name>
        <dbReference type="ChEBI" id="CHEBI:49883"/>
        <label>2</label>
    </ligand>
</feature>
<feature type="binding site" evidence="1">
    <location>
        <position position="104"/>
    </location>
    <ligand>
        <name>[4Fe-4S] cluster</name>
        <dbReference type="ChEBI" id="CHEBI:49883"/>
        <label>2</label>
    </ligand>
</feature>
<feature type="binding site" evidence="1">
    <location>
        <position position="107"/>
    </location>
    <ligand>
        <name>[4Fe-4S] cluster</name>
        <dbReference type="ChEBI" id="CHEBI:49883"/>
        <label>2</label>
    </ligand>
</feature>
<feature type="binding site" evidence="1">
    <location>
        <position position="110"/>
    </location>
    <ligand>
        <name>[4Fe-4S] cluster</name>
        <dbReference type="ChEBI" id="CHEBI:49883"/>
        <label>2</label>
    </ligand>
</feature>
<feature type="binding site" evidence="1">
    <location>
        <position position="114"/>
    </location>
    <ligand>
        <name>[4Fe-4S] cluster</name>
        <dbReference type="ChEBI" id="CHEBI:49883"/>
        <label>1</label>
    </ligand>
</feature>
<name>NDHI_PHABO</name>
<accession>Q8HVM8</accession>
<protein>
    <recommendedName>
        <fullName evidence="1">NAD(P)H-quinone oxidoreductase subunit I, chloroplastic</fullName>
        <ecNumber evidence="1">7.1.1.-</ecNumber>
    </recommendedName>
    <alternativeName>
        <fullName evidence="1">NAD(P)H dehydrogenase subunit I</fullName>
        <shortName evidence="1">NDH subunit I</shortName>
    </alternativeName>
    <alternativeName>
        <fullName evidence="1">NADH-plastoquinone oxidoreductase subunit I</fullName>
    </alternativeName>
</protein>
<keyword id="KW-0004">4Fe-4S</keyword>
<keyword id="KW-0150">Chloroplast</keyword>
<keyword id="KW-0408">Iron</keyword>
<keyword id="KW-0411">Iron-sulfur</keyword>
<keyword id="KW-0472">Membrane</keyword>
<keyword id="KW-0479">Metal-binding</keyword>
<keyword id="KW-0520">NAD</keyword>
<keyword id="KW-0521">NADP</keyword>
<keyword id="KW-0934">Plastid</keyword>
<keyword id="KW-0618">Plastoquinone</keyword>
<keyword id="KW-0874">Quinone</keyword>
<keyword id="KW-0677">Repeat</keyword>
<keyword id="KW-0793">Thylakoid</keyword>
<keyword id="KW-1278">Translocase</keyword>
<reference key="1">
    <citation type="submission" date="2003-01" db="EMBL/GenBank/DDBJ databases">
        <title>Chloroplast DNA phylogeny of tribe Heliantheae (Asteraceae).</title>
        <authorList>
            <person name="Panero J.L."/>
            <person name="Baldwin B.G."/>
            <person name="Schilling E.E."/>
            <person name="Clevinger J.A."/>
        </authorList>
    </citation>
    <scope>NUCLEOTIDE SEQUENCE [GENOMIC DNA]</scope>
</reference>
<evidence type="ECO:0000255" key="1">
    <source>
        <dbReference type="HAMAP-Rule" id="MF_01351"/>
    </source>
</evidence>
<organism>
    <name type="scientific">Phaneroglossa bolusii</name>
    <name type="common">Senecio bolusii</name>
    <dbReference type="NCBI Taxonomy" id="109582"/>
    <lineage>
        <taxon>Eukaryota</taxon>
        <taxon>Viridiplantae</taxon>
        <taxon>Streptophyta</taxon>
        <taxon>Embryophyta</taxon>
        <taxon>Tracheophyta</taxon>
        <taxon>Spermatophyta</taxon>
        <taxon>Magnoliopsida</taxon>
        <taxon>eudicotyledons</taxon>
        <taxon>Gunneridae</taxon>
        <taxon>Pentapetalae</taxon>
        <taxon>asterids</taxon>
        <taxon>campanulids</taxon>
        <taxon>Asterales</taxon>
        <taxon>Asteraceae</taxon>
        <taxon>Asteroideae</taxon>
        <taxon>Senecioneae</taxon>
        <taxon>Senecioninae</taxon>
        <taxon>Phaneroglossa</taxon>
    </lineage>
</organism>